<accession>Q5PE66</accession>
<feature type="chain" id="PRO_1000065463" description="UPF0299 membrane protein YohJ">
    <location>
        <begin position="1"/>
        <end position="132"/>
    </location>
</feature>
<feature type="transmembrane region" description="Helical" evidence="1">
    <location>
        <begin position="7"/>
        <end position="27"/>
    </location>
</feature>
<feature type="transmembrane region" description="Helical" evidence="1">
    <location>
        <begin position="31"/>
        <end position="51"/>
    </location>
</feature>
<feature type="transmembrane region" description="Helical" evidence="1">
    <location>
        <begin position="63"/>
        <end position="83"/>
    </location>
</feature>
<feature type="transmembrane region" description="Helical" evidence="1">
    <location>
        <begin position="93"/>
        <end position="113"/>
    </location>
</feature>
<evidence type="ECO:0000255" key="1">
    <source>
        <dbReference type="HAMAP-Rule" id="MF_01144"/>
    </source>
</evidence>
<name>YOHJ_SALPA</name>
<dbReference type="EMBL" id="CP000026">
    <property type="protein sequence ID" value="AAV76668.1"/>
    <property type="molecule type" value="Genomic_DNA"/>
</dbReference>
<dbReference type="RefSeq" id="WP_000045719.1">
    <property type="nucleotide sequence ID" value="NC_006511.1"/>
</dbReference>
<dbReference type="SMR" id="Q5PE66"/>
<dbReference type="KEGG" id="spt:SPA0670"/>
<dbReference type="HOGENOM" id="CLU_113736_1_1_6"/>
<dbReference type="Proteomes" id="UP000008185">
    <property type="component" value="Chromosome"/>
</dbReference>
<dbReference type="GO" id="GO:0005886">
    <property type="term" value="C:plasma membrane"/>
    <property type="evidence" value="ECO:0007669"/>
    <property type="project" value="UniProtKB-SubCell"/>
</dbReference>
<dbReference type="HAMAP" id="MF_01144">
    <property type="entry name" value="UPF0299"/>
    <property type="match status" value="1"/>
</dbReference>
<dbReference type="InterPro" id="IPR005538">
    <property type="entry name" value="LrgA/CidA"/>
</dbReference>
<dbReference type="InterPro" id="IPR022957">
    <property type="entry name" value="Uncharacterised_UPF0299"/>
</dbReference>
<dbReference type="NCBIfam" id="NF002494">
    <property type="entry name" value="PRK01821.1"/>
    <property type="match status" value="1"/>
</dbReference>
<dbReference type="PANTHER" id="PTHR33931">
    <property type="entry name" value="HOLIN-LIKE PROTEIN CIDA-RELATED"/>
    <property type="match status" value="1"/>
</dbReference>
<dbReference type="PANTHER" id="PTHR33931:SF5">
    <property type="entry name" value="UPF0299 MEMBRANE PROTEIN YOHJ"/>
    <property type="match status" value="1"/>
</dbReference>
<dbReference type="Pfam" id="PF03788">
    <property type="entry name" value="LrgA"/>
    <property type="match status" value="1"/>
</dbReference>
<sequence length="132" mass="14614">MSKSLNIIWQYIRAFVLIYACLYAGIFLASLLPITIPGSIIGMLILFVLLALQILPAKWVNPGCYVLIRYMALLFVPIGVGVMQYFDLLRAQFGPVVVSCAISTLVVFVVVSWSSHLIHGERKVVGQKGTKK</sequence>
<gene>
    <name evidence="1" type="primary">yohJ</name>
    <name type="ordered locus">SPA0670</name>
</gene>
<organism>
    <name type="scientific">Salmonella paratyphi A (strain ATCC 9150 / SARB42)</name>
    <dbReference type="NCBI Taxonomy" id="295319"/>
    <lineage>
        <taxon>Bacteria</taxon>
        <taxon>Pseudomonadati</taxon>
        <taxon>Pseudomonadota</taxon>
        <taxon>Gammaproteobacteria</taxon>
        <taxon>Enterobacterales</taxon>
        <taxon>Enterobacteriaceae</taxon>
        <taxon>Salmonella</taxon>
    </lineage>
</organism>
<keyword id="KW-0997">Cell inner membrane</keyword>
<keyword id="KW-1003">Cell membrane</keyword>
<keyword id="KW-0472">Membrane</keyword>
<keyword id="KW-0812">Transmembrane</keyword>
<keyword id="KW-1133">Transmembrane helix</keyword>
<reference key="1">
    <citation type="journal article" date="2004" name="Nat. Genet.">
        <title>Comparison of genome degradation in Paratyphi A and Typhi, human-restricted serovars of Salmonella enterica that cause typhoid.</title>
        <authorList>
            <person name="McClelland M."/>
            <person name="Sanderson K.E."/>
            <person name="Clifton S.W."/>
            <person name="Latreille P."/>
            <person name="Porwollik S."/>
            <person name="Sabo A."/>
            <person name="Meyer R."/>
            <person name="Bieri T."/>
            <person name="Ozersky P."/>
            <person name="McLellan M."/>
            <person name="Harkins C.R."/>
            <person name="Wang C."/>
            <person name="Nguyen C."/>
            <person name="Berghoff A."/>
            <person name="Elliott G."/>
            <person name="Kohlberg S."/>
            <person name="Strong C."/>
            <person name="Du F."/>
            <person name="Carter J."/>
            <person name="Kremizki C."/>
            <person name="Layman D."/>
            <person name="Leonard S."/>
            <person name="Sun H."/>
            <person name="Fulton L."/>
            <person name="Nash W."/>
            <person name="Miner T."/>
            <person name="Minx P."/>
            <person name="Delehaunty K."/>
            <person name="Fronick C."/>
            <person name="Magrini V."/>
            <person name="Nhan M."/>
            <person name="Warren W."/>
            <person name="Florea L."/>
            <person name="Spieth J."/>
            <person name="Wilson R.K."/>
        </authorList>
    </citation>
    <scope>NUCLEOTIDE SEQUENCE [LARGE SCALE GENOMIC DNA]</scope>
    <source>
        <strain>ATCC 9150 / SARB42</strain>
    </source>
</reference>
<protein>
    <recommendedName>
        <fullName evidence="1">UPF0299 membrane protein YohJ</fullName>
    </recommendedName>
</protein>
<comment type="subcellular location">
    <subcellularLocation>
        <location evidence="1">Cell inner membrane</location>
        <topology evidence="1">Multi-pass membrane protein</topology>
    </subcellularLocation>
</comment>
<comment type="similarity">
    <text evidence="1">Belongs to the UPF0299 family.</text>
</comment>
<proteinExistence type="inferred from homology"/>